<accession>A0K536</accession>
<gene>
    <name evidence="1" type="primary">groEL1</name>
    <name evidence="1" type="synonym">groL1</name>
    <name type="ordered locus">Bcen2424_0860</name>
</gene>
<reference key="1">
    <citation type="submission" date="2006-08" db="EMBL/GenBank/DDBJ databases">
        <title>Complete sequence of chromosome 1 of Burkholderia cenocepacia HI2424.</title>
        <authorList>
            <person name="Copeland A."/>
            <person name="Lucas S."/>
            <person name="Lapidus A."/>
            <person name="Barry K."/>
            <person name="Detter J.C."/>
            <person name="Glavina del Rio T."/>
            <person name="Hammon N."/>
            <person name="Israni S."/>
            <person name="Pitluck S."/>
            <person name="Chain P."/>
            <person name="Malfatti S."/>
            <person name="Shin M."/>
            <person name="Vergez L."/>
            <person name="Schmutz J."/>
            <person name="Larimer F."/>
            <person name="Land M."/>
            <person name="Hauser L."/>
            <person name="Kyrpides N."/>
            <person name="Kim E."/>
            <person name="LiPuma J.J."/>
            <person name="Gonzalez C.F."/>
            <person name="Konstantinidis K."/>
            <person name="Tiedje J.M."/>
            <person name="Richardson P."/>
        </authorList>
    </citation>
    <scope>NUCLEOTIDE SEQUENCE [LARGE SCALE GENOMIC DNA]</scope>
    <source>
        <strain>HI2424</strain>
    </source>
</reference>
<organism>
    <name type="scientific">Burkholderia cenocepacia (strain HI2424)</name>
    <dbReference type="NCBI Taxonomy" id="331272"/>
    <lineage>
        <taxon>Bacteria</taxon>
        <taxon>Pseudomonadati</taxon>
        <taxon>Pseudomonadota</taxon>
        <taxon>Betaproteobacteria</taxon>
        <taxon>Burkholderiales</taxon>
        <taxon>Burkholderiaceae</taxon>
        <taxon>Burkholderia</taxon>
        <taxon>Burkholderia cepacia complex</taxon>
    </lineage>
</organism>
<evidence type="ECO:0000255" key="1">
    <source>
        <dbReference type="HAMAP-Rule" id="MF_00600"/>
    </source>
</evidence>
<evidence type="ECO:0000256" key="2">
    <source>
        <dbReference type="SAM" id="MobiDB-lite"/>
    </source>
</evidence>
<protein>
    <recommendedName>
        <fullName evidence="1">Chaperonin GroEL 1</fullName>
        <ecNumber evidence="1">5.6.1.7</ecNumber>
    </recommendedName>
    <alternativeName>
        <fullName evidence="1">60 kDa chaperonin 1</fullName>
    </alternativeName>
    <alternativeName>
        <fullName evidence="1">Chaperonin-60 1</fullName>
        <shortName evidence="1">Cpn60 1</shortName>
    </alternativeName>
</protein>
<keyword id="KW-0067">ATP-binding</keyword>
<keyword id="KW-0143">Chaperone</keyword>
<keyword id="KW-0963">Cytoplasm</keyword>
<keyword id="KW-0413">Isomerase</keyword>
<keyword id="KW-0547">Nucleotide-binding</keyword>
<name>CH601_BURCH</name>
<sequence length="546" mass="57021">MAAKDVVFGDSARSKMVEGVNILANAVKVTLGPKGRNVVLERSFGGPTVTKDGVSVAKEIELKDKLQNMGAQMVKEVASKTSDNAGDGTTTATVLAQSIVREGMKYVASGMNPMDLKRGIDKAVAAAVEELKKISKPCTTNKEIAQVGSISANSDSSIGDRIAEAMDKVGKEGVITVEDGKSLADELDVVEGMQFDRGYLSPYFINNPDKQVAVLDNPFVLLHDKKVSNIRDLLPVLEQVAKAGRPLLIIAEDVEGEALATLVVNNIRGILKTVAVKAPGFGDRRKAMLEDIAILTGGQVVAEETGLTLEKATLAELGQAKRIEVGKENTTIIDGAGEAVNIEARVKQVRAQIEEATSDYDREKLQERVAKLAGGVAVIKVGAATEVEMKEKKARVEDALHATRAAVEEGIVAGGGVALIRARTAIAGLTGANADQNAGIKIVLRAMEEPLRQIVTNGGEEASVVVAAVAAGKGNYGYNAATGEYVDMVEAGVVDPTKVTRTALQNAASVAGLLLTTDAAVAELPKEDAPMPGGMPGGMGGMGMDM</sequence>
<proteinExistence type="inferred from homology"/>
<feature type="chain" id="PRO_0000331981" description="Chaperonin GroEL 1">
    <location>
        <begin position="1"/>
        <end position="546"/>
    </location>
</feature>
<feature type="region of interest" description="Disordered" evidence="2">
    <location>
        <begin position="526"/>
        <end position="546"/>
    </location>
</feature>
<feature type="compositionally biased region" description="Gly residues" evidence="2">
    <location>
        <begin position="534"/>
        <end position="546"/>
    </location>
</feature>
<feature type="binding site" evidence="1">
    <location>
        <begin position="30"/>
        <end position="33"/>
    </location>
    <ligand>
        <name>ATP</name>
        <dbReference type="ChEBI" id="CHEBI:30616"/>
    </ligand>
</feature>
<feature type="binding site" evidence="1">
    <location>
        <position position="51"/>
    </location>
    <ligand>
        <name>ATP</name>
        <dbReference type="ChEBI" id="CHEBI:30616"/>
    </ligand>
</feature>
<feature type="binding site" evidence="1">
    <location>
        <begin position="87"/>
        <end position="91"/>
    </location>
    <ligand>
        <name>ATP</name>
        <dbReference type="ChEBI" id="CHEBI:30616"/>
    </ligand>
</feature>
<feature type="binding site" evidence="1">
    <location>
        <position position="415"/>
    </location>
    <ligand>
        <name>ATP</name>
        <dbReference type="ChEBI" id="CHEBI:30616"/>
    </ligand>
</feature>
<feature type="binding site" evidence="1">
    <location>
        <begin position="479"/>
        <end position="481"/>
    </location>
    <ligand>
        <name>ATP</name>
        <dbReference type="ChEBI" id="CHEBI:30616"/>
    </ligand>
</feature>
<feature type="binding site" evidence="1">
    <location>
        <position position="495"/>
    </location>
    <ligand>
        <name>ATP</name>
        <dbReference type="ChEBI" id="CHEBI:30616"/>
    </ligand>
</feature>
<dbReference type="EC" id="5.6.1.7" evidence="1"/>
<dbReference type="EMBL" id="CP000458">
    <property type="protein sequence ID" value="ABK07613.1"/>
    <property type="molecule type" value="Genomic_DNA"/>
</dbReference>
<dbReference type="SMR" id="A0K536"/>
<dbReference type="KEGG" id="bch:Bcen2424_0860"/>
<dbReference type="HOGENOM" id="CLU_016503_3_0_4"/>
<dbReference type="GO" id="GO:0005737">
    <property type="term" value="C:cytoplasm"/>
    <property type="evidence" value="ECO:0007669"/>
    <property type="project" value="UniProtKB-SubCell"/>
</dbReference>
<dbReference type="GO" id="GO:0005524">
    <property type="term" value="F:ATP binding"/>
    <property type="evidence" value="ECO:0007669"/>
    <property type="project" value="UniProtKB-UniRule"/>
</dbReference>
<dbReference type="GO" id="GO:0140662">
    <property type="term" value="F:ATP-dependent protein folding chaperone"/>
    <property type="evidence" value="ECO:0007669"/>
    <property type="project" value="InterPro"/>
</dbReference>
<dbReference type="GO" id="GO:0016853">
    <property type="term" value="F:isomerase activity"/>
    <property type="evidence" value="ECO:0007669"/>
    <property type="project" value="UniProtKB-KW"/>
</dbReference>
<dbReference type="GO" id="GO:0051082">
    <property type="term" value="F:unfolded protein binding"/>
    <property type="evidence" value="ECO:0007669"/>
    <property type="project" value="UniProtKB-UniRule"/>
</dbReference>
<dbReference type="GO" id="GO:0042026">
    <property type="term" value="P:protein refolding"/>
    <property type="evidence" value="ECO:0007669"/>
    <property type="project" value="UniProtKB-UniRule"/>
</dbReference>
<dbReference type="CDD" id="cd03344">
    <property type="entry name" value="GroEL"/>
    <property type="match status" value="1"/>
</dbReference>
<dbReference type="FunFam" id="1.10.560.10:FF:000001">
    <property type="entry name" value="60 kDa chaperonin"/>
    <property type="match status" value="1"/>
</dbReference>
<dbReference type="FunFam" id="3.50.7.10:FF:000001">
    <property type="entry name" value="60 kDa chaperonin"/>
    <property type="match status" value="1"/>
</dbReference>
<dbReference type="Gene3D" id="3.50.7.10">
    <property type="entry name" value="GroEL"/>
    <property type="match status" value="1"/>
</dbReference>
<dbReference type="Gene3D" id="1.10.560.10">
    <property type="entry name" value="GroEL-like equatorial domain"/>
    <property type="match status" value="1"/>
</dbReference>
<dbReference type="Gene3D" id="3.30.260.10">
    <property type="entry name" value="TCP-1-like chaperonin intermediate domain"/>
    <property type="match status" value="1"/>
</dbReference>
<dbReference type="HAMAP" id="MF_00600">
    <property type="entry name" value="CH60"/>
    <property type="match status" value="1"/>
</dbReference>
<dbReference type="InterPro" id="IPR018370">
    <property type="entry name" value="Chaperonin_Cpn60_CS"/>
</dbReference>
<dbReference type="InterPro" id="IPR001844">
    <property type="entry name" value="Cpn60/GroEL"/>
</dbReference>
<dbReference type="InterPro" id="IPR002423">
    <property type="entry name" value="Cpn60/GroEL/TCP-1"/>
</dbReference>
<dbReference type="InterPro" id="IPR027409">
    <property type="entry name" value="GroEL-like_apical_dom_sf"/>
</dbReference>
<dbReference type="InterPro" id="IPR027413">
    <property type="entry name" value="GROEL-like_equatorial_sf"/>
</dbReference>
<dbReference type="InterPro" id="IPR027410">
    <property type="entry name" value="TCP-1-like_intermed_sf"/>
</dbReference>
<dbReference type="NCBIfam" id="TIGR02348">
    <property type="entry name" value="GroEL"/>
    <property type="match status" value="1"/>
</dbReference>
<dbReference type="NCBIfam" id="NF000592">
    <property type="entry name" value="PRK00013.1"/>
    <property type="match status" value="1"/>
</dbReference>
<dbReference type="NCBIfam" id="NF009487">
    <property type="entry name" value="PRK12849.1"/>
    <property type="match status" value="1"/>
</dbReference>
<dbReference type="NCBIfam" id="NF009488">
    <property type="entry name" value="PRK12850.1"/>
    <property type="match status" value="1"/>
</dbReference>
<dbReference type="NCBIfam" id="NF009489">
    <property type="entry name" value="PRK12851.1"/>
    <property type="match status" value="1"/>
</dbReference>
<dbReference type="PANTHER" id="PTHR45633">
    <property type="entry name" value="60 KDA HEAT SHOCK PROTEIN, MITOCHONDRIAL"/>
    <property type="match status" value="1"/>
</dbReference>
<dbReference type="Pfam" id="PF00118">
    <property type="entry name" value="Cpn60_TCP1"/>
    <property type="match status" value="1"/>
</dbReference>
<dbReference type="PRINTS" id="PR00298">
    <property type="entry name" value="CHAPERONIN60"/>
</dbReference>
<dbReference type="SUPFAM" id="SSF52029">
    <property type="entry name" value="GroEL apical domain-like"/>
    <property type="match status" value="1"/>
</dbReference>
<dbReference type="SUPFAM" id="SSF48592">
    <property type="entry name" value="GroEL equatorial domain-like"/>
    <property type="match status" value="1"/>
</dbReference>
<dbReference type="SUPFAM" id="SSF54849">
    <property type="entry name" value="GroEL-intermediate domain like"/>
    <property type="match status" value="1"/>
</dbReference>
<dbReference type="PROSITE" id="PS00296">
    <property type="entry name" value="CHAPERONINS_CPN60"/>
    <property type="match status" value="1"/>
</dbReference>
<comment type="function">
    <text evidence="1">Together with its co-chaperonin GroES, plays an essential role in assisting protein folding. The GroEL-GroES system forms a nano-cage that allows encapsulation of the non-native substrate proteins and provides a physical environment optimized to promote and accelerate protein folding.</text>
</comment>
<comment type="catalytic activity">
    <reaction evidence="1">
        <text>ATP + H2O + a folded polypeptide = ADP + phosphate + an unfolded polypeptide.</text>
        <dbReference type="EC" id="5.6.1.7"/>
    </reaction>
</comment>
<comment type="subunit">
    <text evidence="1">Forms a cylinder of 14 subunits composed of two heptameric rings stacked back-to-back. Interacts with the co-chaperonin GroES.</text>
</comment>
<comment type="subcellular location">
    <subcellularLocation>
        <location evidence="1">Cytoplasm</location>
    </subcellularLocation>
</comment>
<comment type="similarity">
    <text evidence="1">Belongs to the chaperonin (HSP60) family.</text>
</comment>